<organism>
    <name type="scientific">Staphylococcus saprophyticus subsp. saprophyticus (strain ATCC 15305 / DSM 20229 / NCIMB 8711 / NCTC 7292 / S-41)</name>
    <dbReference type="NCBI Taxonomy" id="342451"/>
    <lineage>
        <taxon>Bacteria</taxon>
        <taxon>Bacillati</taxon>
        <taxon>Bacillota</taxon>
        <taxon>Bacilli</taxon>
        <taxon>Bacillales</taxon>
        <taxon>Staphylococcaceae</taxon>
        <taxon>Staphylococcus</taxon>
    </lineage>
</organism>
<feature type="chain" id="PRO_0000291324" description="Ribosome hibernation promotion factor">
    <location>
        <begin position="1"/>
        <end position="190"/>
    </location>
</feature>
<protein>
    <recommendedName>
        <fullName evidence="1">Ribosome hibernation promotion factor</fullName>
        <shortName evidence="1">HPF</shortName>
    </recommendedName>
</protein>
<gene>
    <name evidence="1" type="primary">hpf</name>
    <name type="ordered locus">SSP1964</name>
</gene>
<reference key="1">
    <citation type="journal article" date="2005" name="Proc. Natl. Acad. Sci. U.S.A.">
        <title>Whole genome sequence of Staphylococcus saprophyticus reveals the pathogenesis of uncomplicated urinary tract infection.</title>
        <authorList>
            <person name="Kuroda M."/>
            <person name="Yamashita A."/>
            <person name="Hirakawa H."/>
            <person name="Kumano M."/>
            <person name="Morikawa K."/>
            <person name="Higashide M."/>
            <person name="Maruyama A."/>
            <person name="Inose Y."/>
            <person name="Matoba K."/>
            <person name="Toh H."/>
            <person name="Kuhara S."/>
            <person name="Hattori M."/>
            <person name="Ohta T."/>
        </authorList>
    </citation>
    <scope>NUCLEOTIDE SEQUENCE [LARGE SCALE GENOMIC DNA]</scope>
    <source>
        <strain>ATCC 15305 / DSM 20229 / NCIMB 8711 / NCTC 7292 / S-41</strain>
    </source>
</reference>
<comment type="function">
    <text evidence="1">Required for dimerization of active 70S ribosomes into 100S ribosomes in stationary phase; 100S ribosomes are translationally inactive and sometimes present during exponential growth.</text>
</comment>
<comment type="subunit">
    <text evidence="1">Interacts with 100S ribosomes.</text>
</comment>
<comment type="subcellular location">
    <subcellularLocation>
        <location evidence="1">Cytoplasm</location>
    </subcellularLocation>
</comment>
<comment type="similarity">
    <text evidence="1">Belongs to the HPF/YfiA ribosome-associated protein family. Long HPF subfamily.</text>
</comment>
<evidence type="ECO:0000255" key="1">
    <source>
        <dbReference type="HAMAP-Rule" id="MF_00839"/>
    </source>
</evidence>
<sequence length="190" mass="22170">MIRFEIHGENLTITDAIRNYIEEKIGKLERYFNDVPNATAHVKVKTYQNSATKIEVTIPLKKVTLRAEERNDDLYAGIDLINNKLERQVRKYKTRVNRRNRNRGEQEAFASLPEEKEAVEIQNDENEADNEIEIIRAKNFSLKPMDSEEAVLQMDLLGHDFFIFTDRETDGTSIVYKRKDGKYGLIETTE</sequence>
<accession>Q49VV1</accession>
<proteinExistence type="inferred from homology"/>
<dbReference type="EMBL" id="AP008934">
    <property type="protein sequence ID" value="BAE19109.1"/>
    <property type="molecule type" value="Genomic_DNA"/>
</dbReference>
<dbReference type="RefSeq" id="WP_011303632.1">
    <property type="nucleotide sequence ID" value="NZ_MTGA01000039.1"/>
</dbReference>
<dbReference type="SMR" id="Q49VV1"/>
<dbReference type="DNASU" id="3616775"/>
<dbReference type="GeneID" id="3616775"/>
<dbReference type="KEGG" id="ssp:SSP1964"/>
<dbReference type="PATRIC" id="fig|342451.11.peg.1958"/>
<dbReference type="eggNOG" id="COG1544">
    <property type="taxonomic scope" value="Bacteria"/>
</dbReference>
<dbReference type="HOGENOM" id="CLU_071472_0_3_9"/>
<dbReference type="OrthoDB" id="9794975at2"/>
<dbReference type="Proteomes" id="UP000006371">
    <property type="component" value="Chromosome"/>
</dbReference>
<dbReference type="GO" id="GO:0022627">
    <property type="term" value="C:cytosolic small ribosomal subunit"/>
    <property type="evidence" value="ECO:0007669"/>
    <property type="project" value="TreeGrafter"/>
</dbReference>
<dbReference type="GO" id="GO:0043024">
    <property type="term" value="F:ribosomal small subunit binding"/>
    <property type="evidence" value="ECO:0007669"/>
    <property type="project" value="TreeGrafter"/>
</dbReference>
<dbReference type="GO" id="GO:0045900">
    <property type="term" value="P:negative regulation of translational elongation"/>
    <property type="evidence" value="ECO:0007669"/>
    <property type="project" value="TreeGrafter"/>
</dbReference>
<dbReference type="CDD" id="cd00552">
    <property type="entry name" value="RaiA"/>
    <property type="match status" value="1"/>
</dbReference>
<dbReference type="FunFam" id="3.30.505.50:FF:000001">
    <property type="entry name" value="Ribosome hibernation promoting factor"/>
    <property type="match status" value="1"/>
</dbReference>
<dbReference type="Gene3D" id="3.30.160.100">
    <property type="entry name" value="Ribosome hibernation promotion factor-like"/>
    <property type="match status" value="1"/>
</dbReference>
<dbReference type="Gene3D" id="3.30.505.50">
    <property type="entry name" value="Sigma 54 modulation/S30EA ribosomal protein, C-terminal domain"/>
    <property type="match status" value="1"/>
</dbReference>
<dbReference type="HAMAP" id="MF_00839">
    <property type="entry name" value="HPF"/>
    <property type="match status" value="1"/>
</dbReference>
<dbReference type="InterPro" id="IPR050574">
    <property type="entry name" value="HPF/YfiA_ribosome-assoc"/>
</dbReference>
<dbReference type="InterPro" id="IPR034694">
    <property type="entry name" value="HPF_long/plastid"/>
</dbReference>
<dbReference type="InterPro" id="IPR036567">
    <property type="entry name" value="RHF-like"/>
</dbReference>
<dbReference type="InterPro" id="IPR003489">
    <property type="entry name" value="RHF/RaiA"/>
</dbReference>
<dbReference type="InterPro" id="IPR032528">
    <property type="entry name" value="Ribosom_S30AE_C"/>
</dbReference>
<dbReference type="InterPro" id="IPR038416">
    <property type="entry name" value="Ribosom_S30AE_C_sf"/>
</dbReference>
<dbReference type="NCBIfam" id="TIGR00741">
    <property type="entry name" value="yfiA"/>
    <property type="match status" value="1"/>
</dbReference>
<dbReference type="PANTHER" id="PTHR33231">
    <property type="entry name" value="30S RIBOSOMAL PROTEIN"/>
    <property type="match status" value="1"/>
</dbReference>
<dbReference type="PANTHER" id="PTHR33231:SF1">
    <property type="entry name" value="30S RIBOSOMAL PROTEIN"/>
    <property type="match status" value="1"/>
</dbReference>
<dbReference type="Pfam" id="PF16321">
    <property type="entry name" value="Ribosom_S30AE_C"/>
    <property type="match status" value="1"/>
</dbReference>
<dbReference type="Pfam" id="PF02482">
    <property type="entry name" value="Ribosomal_S30AE"/>
    <property type="match status" value="1"/>
</dbReference>
<dbReference type="SUPFAM" id="SSF69754">
    <property type="entry name" value="Ribosome binding protein Y (YfiA homologue)"/>
    <property type="match status" value="1"/>
</dbReference>
<name>HPF_STAS1</name>
<keyword id="KW-0963">Cytoplasm</keyword>
<keyword id="KW-1185">Reference proteome</keyword>
<keyword id="KW-0810">Translation regulation</keyword>